<accession>Q134S6</accession>
<proteinExistence type="inferred from homology"/>
<name>EFG_RHOPS</name>
<reference key="1">
    <citation type="submission" date="2006-03" db="EMBL/GenBank/DDBJ databases">
        <title>Complete sequence of Rhodopseudomonas palustris BisB5.</title>
        <authorList>
            <consortium name="US DOE Joint Genome Institute"/>
            <person name="Copeland A."/>
            <person name="Lucas S."/>
            <person name="Lapidus A."/>
            <person name="Barry K."/>
            <person name="Detter J.C."/>
            <person name="Glavina del Rio T."/>
            <person name="Hammon N."/>
            <person name="Israni S."/>
            <person name="Dalin E."/>
            <person name="Tice H."/>
            <person name="Pitluck S."/>
            <person name="Chain P."/>
            <person name="Malfatti S."/>
            <person name="Shin M."/>
            <person name="Vergez L."/>
            <person name="Schmutz J."/>
            <person name="Larimer F."/>
            <person name="Land M."/>
            <person name="Hauser L."/>
            <person name="Pelletier D.A."/>
            <person name="Kyrpides N."/>
            <person name="Lykidis A."/>
            <person name="Oda Y."/>
            <person name="Harwood C.S."/>
            <person name="Richardson P."/>
        </authorList>
    </citation>
    <scope>NUCLEOTIDE SEQUENCE [LARGE SCALE GENOMIC DNA]</scope>
    <source>
        <strain>BisB5</strain>
    </source>
</reference>
<feature type="chain" id="PRO_0000263494" description="Elongation factor G">
    <location>
        <begin position="1"/>
        <end position="690"/>
    </location>
</feature>
<feature type="domain" description="tr-type G">
    <location>
        <begin position="8"/>
        <end position="283"/>
    </location>
</feature>
<feature type="binding site" evidence="1">
    <location>
        <begin position="17"/>
        <end position="24"/>
    </location>
    <ligand>
        <name>GTP</name>
        <dbReference type="ChEBI" id="CHEBI:37565"/>
    </ligand>
</feature>
<feature type="binding site" evidence="1">
    <location>
        <begin position="81"/>
        <end position="85"/>
    </location>
    <ligand>
        <name>GTP</name>
        <dbReference type="ChEBI" id="CHEBI:37565"/>
    </ligand>
</feature>
<feature type="binding site" evidence="1">
    <location>
        <begin position="135"/>
        <end position="138"/>
    </location>
    <ligand>
        <name>GTP</name>
        <dbReference type="ChEBI" id="CHEBI:37565"/>
    </ligand>
</feature>
<evidence type="ECO:0000255" key="1">
    <source>
        <dbReference type="HAMAP-Rule" id="MF_00054"/>
    </source>
</evidence>
<gene>
    <name evidence="1" type="primary">fusA</name>
    <name type="ordered locus">RPD_3187</name>
</gene>
<keyword id="KW-0963">Cytoplasm</keyword>
<keyword id="KW-0251">Elongation factor</keyword>
<keyword id="KW-0342">GTP-binding</keyword>
<keyword id="KW-0547">Nucleotide-binding</keyword>
<keyword id="KW-0648">Protein biosynthesis</keyword>
<dbReference type="EMBL" id="CP000283">
    <property type="protein sequence ID" value="ABE40413.1"/>
    <property type="molecule type" value="Genomic_DNA"/>
</dbReference>
<dbReference type="SMR" id="Q134S6"/>
<dbReference type="STRING" id="316057.RPD_3187"/>
<dbReference type="KEGG" id="rpd:RPD_3187"/>
<dbReference type="eggNOG" id="COG0480">
    <property type="taxonomic scope" value="Bacteria"/>
</dbReference>
<dbReference type="HOGENOM" id="CLU_002794_4_1_5"/>
<dbReference type="BioCyc" id="RPAL316057:RPD_RS16000-MONOMER"/>
<dbReference type="Proteomes" id="UP000001818">
    <property type="component" value="Chromosome"/>
</dbReference>
<dbReference type="GO" id="GO:0005737">
    <property type="term" value="C:cytoplasm"/>
    <property type="evidence" value="ECO:0007669"/>
    <property type="project" value="UniProtKB-SubCell"/>
</dbReference>
<dbReference type="GO" id="GO:0005525">
    <property type="term" value="F:GTP binding"/>
    <property type="evidence" value="ECO:0007669"/>
    <property type="project" value="UniProtKB-UniRule"/>
</dbReference>
<dbReference type="GO" id="GO:0003924">
    <property type="term" value="F:GTPase activity"/>
    <property type="evidence" value="ECO:0007669"/>
    <property type="project" value="InterPro"/>
</dbReference>
<dbReference type="GO" id="GO:0097216">
    <property type="term" value="F:guanosine tetraphosphate binding"/>
    <property type="evidence" value="ECO:0007669"/>
    <property type="project" value="UniProtKB-ARBA"/>
</dbReference>
<dbReference type="GO" id="GO:0003746">
    <property type="term" value="F:translation elongation factor activity"/>
    <property type="evidence" value="ECO:0007669"/>
    <property type="project" value="UniProtKB-UniRule"/>
</dbReference>
<dbReference type="GO" id="GO:0032790">
    <property type="term" value="P:ribosome disassembly"/>
    <property type="evidence" value="ECO:0007669"/>
    <property type="project" value="TreeGrafter"/>
</dbReference>
<dbReference type="CDD" id="cd01886">
    <property type="entry name" value="EF-G"/>
    <property type="match status" value="1"/>
</dbReference>
<dbReference type="CDD" id="cd16262">
    <property type="entry name" value="EFG_III"/>
    <property type="match status" value="1"/>
</dbReference>
<dbReference type="CDD" id="cd01434">
    <property type="entry name" value="EFG_mtEFG1_IV"/>
    <property type="match status" value="1"/>
</dbReference>
<dbReference type="CDD" id="cd03713">
    <property type="entry name" value="EFG_mtEFG_C"/>
    <property type="match status" value="1"/>
</dbReference>
<dbReference type="CDD" id="cd04088">
    <property type="entry name" value="EFG_mtEFG_II"/>
    <property type="match status" value="1"/>
</dbReference>
<dbReference type="FunFam" id="2.40.30.10:FF:000006">
    <property type="entry name" value="Elongation factor G"/>
    <property type="match status" value="1"/>
</dbReference>
<dbReference type="FunFam" id="3.30.230.10:FF:000003">
    <property type="entry name" value="Elongation factor G"/>
    <property type="match status" value="1"/>
</dbReference>
<dbReference type="FunFam" id="3.30.70.240:FF:000001">
    <property type="entry name" value="Elongation factor G"/>
    <property type="match status" value="1"/>
</dbReference>
<dbReference type="FunFam" id="3.30.70.870:FF:000001">
    <property type="entry name" value="Elongation factor G"/>
    <property type="match status" value="1"/>
</dbReference>
<dbReference type="FunFam" id="3.40.50.300:FF:000029">
    <property type="entry name" value="Elongation factor G"/>
    <property type="match status" value="1"/>
</dbReference>
<dbReference type="Gene3D" id="3.30.230.10">
    <property type="match status" value="1"/>
</dbReference>
<dbReference type="Gene3D" id="3.30.70.240">
    <property type="match status" value="1"/>
</dbReference>
<dbReference type="Gene3D" id="3.30.70.870">
    <property type="entry name" value="Elongation Factor G (Translational Gtpase), domain 3"/>
    <property type="match status" value="1"/>
</dbReference>
<dbReference type="Gene3D" id="3.40.50.300">
    <property type="entry name" value="P-loop containing nucleotide triphosphate hydrolases"/>
    <property type="match status" value="1"/>
</dbReference>
<dbReference type="Gene3D" id="2.40.30.10">
    <property type="entry name" value="Translation factors"/>
    <property type="match status" value="1"/>
</dbReference>
<dbReference type="HAMAP" id="MF_00054_B">
    <property type="entry name" value="EF_G_EF_2_B"/>
    <property type="match status" value="1"/>
</dbReference>
<dbReference type="InterPro" id="IPR041095">
    <property type="entry name" value="EFG_II"/>
</dbReference>
<dbReference type="InterPro" id="IPR009022">
    <property type="entry name" value="EFG_III"/>
</dbReference>
<dbReference type="InterPro" id="IPR035647">
    <property type="entry name" value="EFG_III/V"/>
</dbReference>
<dbReference type="InterPro" id="IPR047872">
    <property type="entry name" value="EFG_IV"/>
</dbReference>
<dbReference type="InterPro" id="IPR035649">
    <property type="entry name" value="EFG_V"/>
</dbReference>
<dbReference type="InterPro" id="IPR000640">
    <property type="entry name" value="EFG_V-like"/>
</dbReference>
<dbReference type="InterPro" id="IPR004161">
    <property type="entry name" value="EFTu-like_2"/>
</dbReference>
<dbReference type="InterPro" id="IPR031157">
    <property type="entry name" value="G_TR_CS"/>
</dbReference>
<dbReference type="InterPro" id="IPR027417">
    <property type="entry name" value="P-loop_NTPase"/>
</dbReference>
<dbReference type="InterPro" id="IPR020568">
    <property type="entry name" value="Ribosomal_Su5_D2-typ_SF"/>
</dbReference>
<dbReference type="InterPro" id="IPR014721">
    <property type="entry name" value="Ribsml_uS5_D2-typ_fold_subgr"/>
</dbReference>
<dbReference type="InterPro" id="IPR005225">
    <property type="entry name" value="Small_GTP-bd"/>
</dbReference>
<dbReference type="InterPro" id="IPR000795">
    <property type="entry name" value="T_Tr_GTP-bd_dom"/>
</dbReference>
<dbReference type="InterPro" id="IPR009000">
    <property type="entry name" value="Transl_B-barrel_sf"/>
</dbReference>
<dbReference type="InterPro" id="IPR004540">
    <property type="entry name" value="Transl_elong_EFG/EF2"/>
</dbReference>
<dbReference type="InterPro" id="IPR005517">
    <property type="entry name" value="Transl_elong_EFG/EF2_IV"/>
</dbReference>
<dbReference type="NCBIfam" id="TIGR00484">
    <property type="entry name" value="EF-G"/>
    <property type="match status" value="1"/>
</dbReference>
<dbReference type="NCBIfam" id="NF009379">
    <property type="entry name" value="PRK12740.1-3"/>
    <property type="match status" value="1"/>
</dbReference>
<dbReference type="NCBIfam" id="NF009381">
    <property type="entry name" value="PRK12740.1-5"/>
    <property type="match status" value="1"/>
</dbReference>
<dbReference type="NCBIfam" id="TIGR00231">
    <property type="entry name" value="small_GTP"/>
    <property type="match status" value="1"/>
</dbReference>
<dbReference type="PANTHER" id="PTHR43261:SF1">
    <property type="entry name" value="RIBOSOME-RELEASING FACTOR 2, MITOCHONDRIAL"/>
    <property type="match status" value="1"/>
</dbReference>
<dbReference type="PANTHER" id="PTHR43261">
    <property type="entry name" value="TRANSLATION ELONGATION FACTOR G-RELATED"/>
    <property type="match status" value="1"/>
</dbReference>
<dbReference type="Pfam" id="PF00679">
    <property type="entry name" value="EFG_C"/>
    <property type="match status" value="1"/>
</dbReference>
<dbReference type="Pfam" id="PF14492">
    <property type="entry name" value="EFG_III"/>
    <property type="match status" value="1"/>
</dbReference>
<dbReference type="Pfam" id="PF03764">
    <property type="entry name" value="EFG_IV"/>
    <property type="match status" value="1"/>
</dbReference>
<dbReference type="Pfam" id="PF00009">
    <property type="entry name" value="GTP_EFTU"/>
    <property type="match status" value="1"/>
</dbReference>
<dbReference type="Pfam" id="PF03144">
    <property type="entry name" value="GTP_EFTU_D2"/>
    <property type="match status" value="1"/>
</dbReference>
<dbReference type="PRINTS" id="PR00315">
    <property type="entry name" value="ELONGATNFCT"/>
</dbReference>
<dbReference type="SMART" id="SM00838">
    <property type="entry name" value="EFG_C"/>
    <property type="match status" value="1"/>
</dbReference>
<dbReference type="SMART" id="SM00889">
    <property type="entry name" value="EFG_IV"/>
    <property type="match status" value="1"/>
</dbReference>
<dbReference type="SUPFAM" id="SSF54980">
    <property type="entry name" value="EF-G C-terminal domain-like"/>
    <property type="match status" value="2"/>
</dbReference>
<dbReference type="SUPFAM" id="SSF52540">
    <property type="entry name" value="P-loop containing nucleoside triphosphate hydrolases"/>
    <property type="match status" value="1"/>
</dbReference>
<dbReference type="SUPFAM" id="SSF54211">
    <property type="entry name" value="Ribosomal protein S5 domain 2-like"/>
    <property type="match status" value="1"/>
</dbReference>
<dbReference type="SUPFAM" id="SSF50447">
    <property type="entry name" value="Translation proteins"/>
    <property type="match status" value="1"/>
</dbReference>
<dbReference type="PROSITE" id="PS00301">
    <property type="entry name" value="G_TR_1"/>
    <property type="match status" value="1"/>
</dbReference>
<dbReference type="PROSITE" id="PS51722">
    <property type="entry name" value="G_TR_2"/>
    <property type="match status" value="1"/>
</dbReference>
<protein>
    <recommendedName>
        <fullName evidence="1">Elongation factor G</fullName>
        <shortName evidence="1">EF-G</shortName>
    </recommendedName>
</protein>
<organism>
    <name type="scientific">Rhodopseudomonas palustris (strain BisB5)</name>
    <dbReference type="NCBI Taxonomy" id="316057"/>
    <lineage>
        <taxon>Bacteria</taxon>
        <taxon>Pseudomonadati</taxon>
        <taxon>Pseudomonadota</taxon>
        <taxon>Alphaproteobacteria</taxon>
        <taxon>Hyphomicrobiales</taxon>
        <taxon>Nitrobacteraceae</taxon>
        <taxon>Rhodopseudomonas</taxon>
    </lineage>
</organism>
<sequence length="690" mass="75900">MPRVHAIEDYRNFGIMAHIDAGKTTTTERILYYTGKSHRIGEVHEGAATMDWMEQEQERGITITSAATTAFWNGKRLNIIDTPGHVDFTIEVERSLRVLDGAVCVLDSNQGVEPQTETVWRQGDKYKVPRIVFANKMDKTGADFFKCLQDIIDRLGAKPVAIQLPIGSESNFKGLIDLVRMKAVVWTDESLGAKFEDAEIPEDLLEQAKEYREKMIEAAVELDDDAMAAYLDGNEPEEATLKRLIRKAVLTGAFYPVLCGSAFKNKGVQPLLDAVVDYLPSPVDVPAIKGIDDDGNEVVRQADDKEPLALLAFKIMDDPFVGTITFCRIYSGVLQSGTGVVNSTREKKERIGRMLLMHANNREDIKEAYAGDIVALAGLKEARTGDTLCDPAKPVILEKMEFPEPVIEIAIEPKSKADQEKLGVALAKLAAEDPSFRVSTDIESGQTILKGMGELHLDIKVDILRRTYKVDANIGAPQVAFRERITKRAEVDYTHKKQTGGTGQFAAVKFIVEPNEPGKGYEFESKIVGGAVPKEYIPGVEKGIESVLSSGVVAGFPVVDVKVSLIDGKYHDVDSSALAFEIASRAAFREALQKGKSVLLEPIMKVEVVTPEDYTGSVIGDLNSRRGQIQGQDMRGNANVINAMVPLMNMFGYVNNLRSMSQGRATFTMQFDHYAEAPANVSAEVQKKFA</sequence>
<comment type="function">
    <text evidence="1">Catalyzes the GTP-dependent ribosomal translocation step during translation elongation. During this step, the ribosome changes from the pre-translocational (PRE) to the post-translocational (POST) state as the newly formed A-site-bound peptidyl-tRNA and P-site-bound deacylated tRNA move to the P and E sites, respectively. Catalyzes the coordinated movement of the two tRNA molecules, the mRNA and conformational changes in the ribosome.</text>
</comment>
<comment type="subcellular location">
    <subcellularLocation>
        <location evidence="1">Cytoplasm</location>
    </subcellularLocation>
</comment>
<comment type="similarity">
    <text evidence="1">Belongs to the TRAFAC class translation factor GTPase superfamily. Classic translation factor GTPase family. EF-G/EF-2 subfamily.</text>
</comment>